<accession>B4J6M4</accession>
<dbReference type="EC" id="3.1.-.-" evidence="1"/>
<dbReference type="EMBL" id="CH916367">
    <property type="protein sequence ID" value="EDW00927.1"/>
    <property type="molecule type" value="Genomic_DNA"/>
</dbReference>
<dbReference type="SMR" id="B4J6M4"/>
<dbReference type="FunCoup" id="B4J6M4">
    <property type="interactions" value="2155"/>
</dbReference>
<dbReference type="STRING" id="7222.B4J6M4"/>
<dbReference type="EnsemblMetazoa" id="FBtr0156571">
    <property type="protein sequence ID" value="FBpp0155063"/>
    <property type="gene ID" value="FBgn0128619"/>
</dbReference>
<dbReference type="EnsemblMetazoa" id="XM_001986024.2">
    <property type="protein sequence ID" value="XP_001986060.1"/>
    <property type="gene ID" value="LOC6560870"/>
</dbReference>
<dbReference type="GeneID" id="6560870"/>
<dbReference type="KEGG" id="dgr:6560870"/>
<dbReference type="CTD" id="2237"/>
<dbReference type="eggNOG" id="KOG2519">
    <property type="taxonomic scope" value="Eukaryota"/>
</dbReference>
<dbReference type="HOGENOM" id="CLU_032444_2_0_1"/>
<dbReference type="InParanoid" id="B4J6M4"/>
<dbReference type="OMA" id="MGIPWVQ"/>
<dbReference type="OrthoDB" id="1937206at2759"/>
<dbReference type="PhylomeDB" id="B4J6M4"/>
<dbReference type="Proteomes" id="UP000001070">
    <property type="component" value="Unassembled WGS sequence"/>
</dbReference>
<dbReference type="GO" id="GO:0005739">
    <property type="term" value="C:mitochondrion"/>
    <property type="evidence" value="ECO:0007669"/>
    <property type="project" value="UniProtKB-SubCell"/>
</dbReference>
<dbReference type="GO" id="GO:0005730">
    <property type="term" value="C:nucleolus"/>
    <property type="evidence" value="ECO:0007669"/>
    <property type="project" value="UniProtKB-SubCell"/>
</dbReference>
<dbReference type="GO" id="GO:0005654">
    <property type="term" value="C:nucleoplasm"/>
    <property type="evidence" value="ECO:0007669"/>
    <property type="project" value="UniProtKB-SubCell"/>
</dbReference>
<dbReference type="GO" id="GO:0008409">
    <property type="term" value="F:5'-3' exonuclease activity"/>
    <property type="evidence" value="ECO:0007669"/>
    <property type="project" value="UniProtKB-UniRule"/>
</dbReference>
<dbReference type="GO" id="GO:0017108">
    <property type="term" value="F:5'-flap endonuclease activity"/>
    <property type="evidence" value="ECO:0007669"/>
    <property type="project" value="UniProtKB-UniRule"/>
</dbReference>
<dbReference type="GO" id="GO:0003677">
    <property type="term" value="F:DNA binding"/>
    <property type="evidence" value="ECO:0007669"/>
    <property type="project" value="UniProtKB-UniRule"/>
</dbReference>
<dbReference type="GO" id="GO:0000287">
    <property type="term" value="F:magnesium ion binding"/>
    <property type="evidence" value="ECO:0007669"/>
    <property type="project" value="UniProtKB-UniRule"/>
</dbReference>
<dbReference type="GO" id="GO:0030145">
    <property type="term" value="F:manganese ion binding"/>
    <property type="evidence" value="ECO:0007669"/>
    <property type="project" value="TreeGrafter"/>
</dbReference>
<dbReference type="GO" id="GO:0004523">
    <property type="term" value="F:RNA-DNA hybrid ribonuclease activity"/>
    <property type="evidence" value="ECO:0007669"/>
    <property type="project" value="TreeGrafter"/>
</dbReference>
<dbReference type="GO" id="GO:0006284">
    <property type="term" value="P:base-excision repair"/>
    <property type="evidence" value="ECO:0007669"/>
    <property type="project" value="UniProtKB-UniRule"/>
</dbReference>
<dbReference type="GO" id="GO:0043137">
    <property type="term" value="P:DNA replication, removal of RNA primer"/>
    <property type="evidence" value="ECO:0007669"/>
    <property type="project" value="UniProtKB-UniRule"/>
</dbReference>
<dbReference type="CDD" id="cd09907">
    <property type="entry name" value="H3TH_FEN1-Euk"/>
    <property type="match status" value="1"/>
</dbReference>
<dbReference type="CDD" id="cd09867">
    <property type="entry name" value="PIN_FEN1"/>
    <property type="match status" value="1"/>
</dbReference>
<dbReference type="FunFam" id="1.10.150.20:FF:000009">
    <property type="entry name" value="Flap endonuclease 1"/>
    <property type="match status" value="1"/>
</dbReference>
<dbReference type="FunFam" id="3.40.50.1010:FF:000003">
    <property type="entry name" value="Flap endonuclease 1"/>
    <property type="match status" value="1"/>
</dbReference>
<dbReference type="Gene3D" id="1.10.150.20">
    <property type="entry name" value="5' to 3' exonuclease, C-terminal subdomain"/>
    <property type="match status" value="1"/>
</dbReference>
<dbReference type="Gene3D" id="3.40.50.1010">
    <property type="entry name" value="5'-nuclease"/>
    <property type="match status" value="1"/>
</dbReference>
<dbReference type="HAMAP" id="MF_00614">
    <property type="entry name" value="Fen"/>
    <property type="match status" value="1"/>
</dbReference>
<dbReference type="InterPro" id="IPR036279">
    <property type="entry name" value="5-3_exonuclease_C_sf"/>
</dbReference>
<dbReference type="InterPro" id="IPR023426">
    <property type="entry name" value="Flap_endonuc"/>
</dbReference>
<dbReference type="InterPro" id="IPR008918">
    <property type="entry name" value="HhH2"/>
</dbReference>
<dbReference type="InterPro" id="IPR029060">
    <property type="entry name" value="PIN-like_dom_sf"/>
</dbReference>
<dbReference type="InterPro" id="IPR006086">
    <property type="entry name" value="XPG-I_dom"/>
</dbReference>
<dbReference type="InterPro" id="IPR006084">
    <property type="entry name" value="XPG/Rad2"/>
</dbReference>
<dbReference type="InterPro" id="IPR019974">
    <property type="entry name" value="XPG_CS"/>
</dbReference>
<dbReference type="InterPro" id="IPR006085">
    <property type="entry name" value="XPG_DNA_repair_N"/>
</dbReference>
<dbReference type="PANTHER" id="PTHR11081:SF9">
    <property type="entry name" value="FLAP ENDONUCLEASE 1"/>
    <property type="match status" value="1"/>
</dbReference>
<dbReference type="PANTHER" id="PTHR11081">
    <property type="entry name" value="FLAP ENDONUCLEASE FAMILY MEMBER"/>
    <property type="match status" value="1"/>
</dbReference>
<dbReference type="Pfam" id="PF00867">
    <property type="entry name" value="XPG_I"/>
    <property type="match status" value="1"/>
</dbReference>
<dbReference type="Pfam" id="PF00752">
    <property type="entry name" value="XPG_N"/>
    <property type="match status" value="1"/>
</dbReference>
<dbReference type="PRINTS" id="PR00853">
    <property type="entry name" value="XPGRADSUPER"/>
</dbReference>
<dbReference type="SMART" id="SM00279">
    <property type="entry name" value="HhH2"/>
    <property type="match status" value="1"/>
</dbReference>
<dbReference type="SMART" id="SM00484">
    <property type="entry name" value="XPGI"/>
    <property type="match status" value="1"/>
</dbReference>
<dbReference type="SMART" id="SM00485">
    <property type="entry name" value="XPGN"/>
    <property type="match status" value="1"/>
</dbReference>
<dbReference type="SUPFAM" id="SSF47807">
    <property type="entry name" value="5' to 3' exonuclease, C-terminal subdomain"/>
    <property type="match status" value="1"/>
</dbReference>
<dbReference type="SUPFAM" id="SSF88723">
    <property type="entry name" value="PIN domain-like"/>
    <property type="match status" value="1"/>
</dbReference>
<dbReference type="PROSITE" id="PS00841">
    <property type="entry name" value="XPG_1"/>
    <property type="match status" value="1"/>
</dbReference>
<dbReference type="PROSITE" id="PS00842">
    <property type="entry name" value="XPG_2"/>
    <property type="match status" value="1"/>
</dbReference>
<protein>
    <recommendedName>
        <fullName evidence="1">Flap endonuclease 1</fullName>
        <shortName evidence="1">FEN-1</shortName>
        <ecNumber evidence="1">3.1.-.-</ecNumber>
    </recommendedName>
    <alternativeName>
        <fullName evidence="1">Flap structure-specific endonuclease 1</fullName>
    </alternativeName>
</protein>
<comment type="function">
    <text evidence="1">Structure-specific nuclease with 5'-flap endonuclease and 5'-3' exonuclease activities involved in DNA replication and repair. During DNA replication, cleaves the 5'-overhanging flap structure that is generated by displacement synthesis when DNA polymerase encounters the 5'-end of a downstream Okazaki fragment. It enters the flap from the 5'-end and then tracks to cleave the flap base, leaving a nick for ligation. Also involved in the long patch base excision repair (LP-BER) pathway, by cleaving within the apurinic/apyrimidinic (AP) site-terminated flap. Acts as a genome stabilization factor that prevents flaps from equilibrating into structures that lead to duplications and deletions. Also possesses 5'-3' exonuclease activity on nicked or gapped double-stranded DNA, and exhibits RNase H activity. Also involved in replication and repair of rDNA and in repairing mitochondrial DNA.</text>
</comment>
<comment type="cofactor">
    <cofactor evidence="1">
        <name>Mg(2+)</name>
        <dbReference type="ChEBI" id="CHEBI:18420"/>
    </cofactor>
    <text evidence="1">Binds 2 magnesium ions per subunit. They probably participate in the reaction catalyzed by the enzyme. May bind an additional third magnesium ion after substrate binding.</text>
</comment>
<comment type="subunit">
    <text evidence="1">Interacts with PCNA. Three molecules of FEN1 bind to one PCNA trimer with each molecule binding to one PCNA monomer. PCNA stimulates the nuclease activity without altering cleavage specificity.</text>
</comment>
<comment type="subcellular location">
    <subcellularLocation>
        <location evidence="1">Nucleus</location>
        <location evidence="1">Nucleolus</location>
    </subcellularLocation>
    <subcellularLocation>
        <location evidence="1">Nucleus</location>
        <location evidence="1">Nucleoplasm</location>
    </subcellularLocation>
    <subcellularLocation>
        <location evidence="1">Mitochondrion</location>
    </subcellularLocation>
    <text evidence="1">Resides mostly in the nucleoli and relocalizes to the nucleoplasm upon DNA damage.</text>
</comment>
<comment type="PTM">
    <text evidence="1">Phosphorylated. Phosphorylation upon DNA damage induces relocalization to the nuclear plasma.</text>
</comment>
<comment type="similarity">
    <text evidence="1">Belongs to the XPG/RAD2 endonuclease family. FEN1 subfamily.</text>
</comment>
<reference key="1">
    <citation type="journal article" date="2007" name="Nature">
        <title>Evolution of genes and genomes on the Drosophila phylogeny.</title>
        <authorList>
            <consortium name="Drosophila 12 genomes consortium"/>
        </authorList>
    </citation>
    <scope>NUCLEOTIDE SEQUENCE [LARGE SCALE GENOMIC DNA]</scope>
    <source>
        <strain>Tucson 15287-2541.00</strain>
    </source>
</reference>
<proteinExistence type="inferred from homology"/>
<evidence type="ECO:0000255" key="1">
    <source>
        <dbReference type="HAMAP-Rule" id="MF_03140"/>
    </source>
</evidence>
<evidence type="ECO:0000256" key="2">
    <source>
        <dbReference type="SAM" id="MobiDB-lite"/>
    </source>
</evidence>
<name>FEN1_DROGR</name>
<organism>
    <name type="scientific">Drosophila grimshawi</name>
    <name type="common">Hawaiian fruit fly</name>
    <name type="synonym">Idiomyia grimshawi</name>
    <dbReference type="NCBI Taxonomy" id="7222"/>
    <lineage>
        <taxon>Eukaryota</taxon>
        <taxon>Metazoa</taxon>
        <taxon>Ecdysozoa</taxon>
        <taxon>Arthropoda</taxon>
        <taxon>Hexapoda</taxon>
        <taxon>Insecta</taxon>
        <taxon>Pterygota</taxon>
        <taxon>Neoptera</taxon>
        <taxon>Endopterygota</taxon>
        <taxon>Diptera</taxon>
        <taxon>Brachycera</taxon>
        <taxon>Muscomorpha</taxon>
        <taxon>Ephydroidea</taxon>
        <taxon>Drosophilidae</taxon>
        <taxon>Drosophila</taxon>
        <taxon>Hawaiian Drosophila</taxon>
    </lineage>
</organism>
<gene>
    <name evidence="1" type="primary">Fen1</name>
    <name type="ORF">GH21157</name>
</gene>
<feature type="chain" id="PRO_0000403499" description="Flap endonuclease 1">
    <location>
        <begin position="1"/>
        <end position="388"/>
    </location>
</feature>
<feature type="region of interest" description="N-domain">
    <location>
        <begin position="1"/>
        <end position="104"/>
    </location>
</feature>
<feature type="region of interest" description="I-domain">
    <location>
        <begin position="122"/>
        <end position="253"/>
    </location>
</feature>
<feature type="region of interest" description="Interaction with PCNA" evidence="1">
    <location>
        <begin position="336"/>
        <end position="344"/>
    </location>
</feature>
<feature type="region of interest" description="Disordered" evidence="2">
    <location>
        <begin position="355"/>
        <end position="388"/>
    </location>
</feature>
<feature type="binding site" evidence="1">
    <location>
        <position position="34"/>
    </location>
    <ligand>
        <name>Mg(2+)</name>
        <dbReference type="ChEBI" id="CHEBI:18420"/>
        <label>1</label>
    </ligand>
</feature>
<feature type="binding site" evidence="1">
    <location>
        <position position="47"/>
    </location>
    <ligand>
        <name>DNA</name>
        <dbReference type="ChEBI" id="CHEBI:16991"/>
    </ligand>
</feature>
<feature type="binding site" evidence="1">
    <location>
        <position position="70"/>
    </location>
    <ligand>
        <name>DNA</name>
        <dbReference type="ChEBI" id="CHEBI:16991"/>
    </ligand>
</feature>
<feature type="binding site" evidence="1">
    <location>
        <position position="86"/>
    </location>
    <ligand>
        <name>Mg(2+)</name>
        <dbReference type="ChEBI" id="CHEBI:18420"/>
        <label>1</label>
    </ligand>
</feature>
<feature type="binding site" evidence="1">
    <location>
        <position position="158"/>
    </location>
    <ligand>
        <name>DNA</name>
        <dbReference type="ChEBI" id="CHEBI:16991"/>
    </ligand>
</feature>
<feature type="binding site" evidence="1">
    <location>
        <position position="158"/>
    </location>
    <ligand>
        <name>Mg(2+)</name>
        <dbReference type="ChEBI" id="CHEBI:18420"/>
        <label>1</label>
    </ligand>
</feature>
<feature type="binding site" evidence="1">
    <location>
        <position position="160"/>
    </location>
    <ligand>
        <name>Mg(2+)</name>
        <dbReference type="ChEBI" id="CHEBI:18420"/>
        <label>1</label>
    </ligand>
</feature>
<feature type="binding site" evidence="1">
    <location>
        <position position="179"/>
    </location>
    <ligand>
        <name>Mg(2+)</name>
        <dbReference type="ChEBI" id="CHEBI:18420"/>
        <label>2</label>
    </ligand>
</feature>
<feature type="binding site" evidence="1">
    <location>
        <position position="181"/>
    </location>
    <ligand>
        <name>Mg(2+)</name>
        <dbReference type="ChEBI" id="CHEBI:18420"/>
        <label>2</label>
    </ligand>
</feature>
<feature type="binding site" evidence="1">
    <location>
        <position position="231"/>
    </location>
    <ligand>
        <name>DNA</name>
        <dbReference type="ChEBI" id="CHEBI:16991"/>
    </ligand>
</feature>
<feature type="binding site" evidence="1">
    <location>
        <position position="233"/>
    </location>
    <ligand>
        <name>DNA</name>
        <dbReference type="ChEBI" id="CHEBI:16991"/>
    </ligand>
</feature>
<feature type="binding site" evidence="1">
    <location>
        <position position="233"/>
    </location>
    <ligand>
        <name>Mg(2+)</name>
        <dbReference type="ChEBI" id="CHEBI:18420"/>
        <label>2</label>
    </ligand>
</feature>
<sequence length="388" mass="43170">MGILGLSKLIADLAPLAIRESEIKNFFGRKVAIDASMCLYQFLIAVRSEGAQLAAVNGDPTSHLMGMFYRTIRLLDNGIKPVYVFDGAPPDMKSGELAKRAERRDEAEKALKAATEAGDEAQIEKFNRRLVRVTKEHSREAKELLKLMGVPYVDAPCEAEAQCAALVKAGKVYATATEDMDALTFGSCKLLRYLTYSEARKMPVKEFSYDKVLQGLELTSKEFIDLCILMGCDYCESIRGVGPKRAIELIKSYRDIETILENIDTNKYAVPENWNYKRARELFIEPDVTDASTIDLKWTDPDEDGLVQFLCGDRQFNEERVRNGAKKLLKSKQAQTQVRLDSFFKTLPSSPNAIAAAKRKAEESKKSANSKKAKIGGGSGAGRGRRPK</sequence>
<keyword id="KW-0227">DNA damage</keyword>
<keyword id="KW-0234">DNA repair</keyword>
<keyword id="KW-0235">DNA replication</keyword>
<keyword id="KW-0255">Endonuclease</keyword>
<keyword id="KW-0269">Exonuclease</keyword>
<keyword id="KW-0378">Hydrolase</keyword>
<keyword id="KW-0460">Magnesium</keyword>
<keyword id="KW-0479">Metal-binding</keyword>
<keyword id="KW-0496">Mitochondrion</keyword>
<keyword id="KW-0540">Nuclease</keyword>
<keyword id="KW-0539">Nucleus</keyword>
<keyword id="KW-0597">Phosphoprotein</keyword>
<keyword id="KW-1185">Reference proteome</keyword>